<organism>
    <name type="scientific">Pyrobaculum aerophilum (strain ATCC 51768 / DSM 7523 / JCM 9630 / CIP 104966 / NBRC 100827 / IM2)</name>
    <dbReference type="NCBI Taxonomy" id="178306"/>
    <lineage>
        <taxon>Archaea</taxon>
        <taxon>Thermoproteota</taxon>
        <taxon>Thermoprotei</taxon>
        <taxon>Thermoproteales</taxon>
        <taxon>Thermoproteaceae</taxon>
        <taxon>Pyrobaculum</taxon>
    </lineage>
</organism>
<evidence type="ECO:0000256" key="1">
    <source>
        <dbReference type="SAM" id="MobiDB-lite"/>
    </source>
</evidence>
<evidence type="ECO:0000305" key="2"/>
<name>RS25_PYRAE</name>
<gene>
    <name type="primary">rps25e</name>
    <name type="ordered locus">PAE2188</name>
</gene>
<accession>Q8ZVP1</accession>
<protein>
    <recommendedName>
        <fullName evidence="2">Small ribosomal subunit protein eS25</fullName>
    </recommendedName>
    <alternativeName>
        <fullName>30S ribosomal protein S25e</fullName>
    </alternativeName>
</protein>
<keyword id="KW-1185">Reference proteome</keyword>
<keyword id="KW-0687">Ribonucleoprotein</keyword>
<keyword id="KW-0689">Ribosomal protein</keyword>
<proteinExistence type="inferred from homology"/>
<feature type="chain" id="PRO_0000192892" description="Small ribosomal subunit protein eS25">
    <location>
        <begin position="1"/>
        <end position="110"/>
    </location>
</feature>
<feature type="region of interest" description="Disordered" evidence="1">
    <location>
        <begin position="1"/>
        <end position="38"/>
    </location>
</feature>
<feature type="compositionally biased region" description="Basic and acidic residues" evidence="1">
    <location>
        <begin position="14"/>
        <end position="38"/>
    </location>
</feature>
<sequence length="110" mass="12451">MGGKKKPTLSQLAKKAEKEKAQQAQKAKKEVKKEETPAKRTIQVLDEKVFQAIAKEVQNMRVITPYEIASKYGIKMSVAFKVLRNLKERGDLVLVAKGHRTEIYVPAKRS</sequence>
<dbReference type="EMBL" id="AE009441">
    <property type="protein sequence ID" value="AAL64015.1"/>
    <property type="molecule type" value="Genomic_DNA"/>
</dbReference>
<dbReference type="RefSeq" id="WP_011008483.1">
    <property type="nucleotide sequence ID" value="NC_003364.1"/>
</dbReference>
<dbReference type="SMR" id="Q8ZVP1"/>
<dbReference type="FunCoup" id="Q8ZVP1">
    <property type="interactions" value="130"/>
</dbReference>
<dbReference type="STRING" id="178306.PAE2188"/>
<dbReference type="EnsemblBacteria" id="AAL64015">
    <property type="protein sequence ID" value="AAL64015"/>
    <property type="gene ID" value="PAE2188"/>
</dbReference>
<dbReference type="GeneID" id="1464348"/>
<dbReference type="KEGG" id="pai:PAE2188"/>
<dbReference type="PATRIC" id="fig|178306.9.peg.1625"/>
<dbReference type="eggNOG" id="arCOG04327">
    <property type="taxonomic scope" value="Archaea"/>
</dbReference>
<dbReference type="HOGENOM" id="CLU_171557_0_0_2"/>
<dbReference type="InParanoid" id="Q8ZVP1"/>
<dbReference type="Proteomes" id="UP000002439">
    <property type="component" value="Chromosome"/>
</dbReference>
<dbReference type="GO" id="GO:0022627">
    <property type="term" value="C:cytosolic small ribosomal subunit"/>
    <property type="evidence" value="ECO:0000318"/>
    <property type="project" value="GO_Central"/>
</dbReference>
<dbReference type="GO" id="GO:0003735">
    <property type="term" value="F:structural constituent of ribosome"/>
    <property type="evidence" value="ECO:0000318"/>
    <property type="project" value="GO_Central"/>
</dbReference>
<dbReference type="Gene3D" id="1.10.10.10">
    <property type="entry name" value="Winged helix-like DNA-binding domain superfamily/Winged helix DNA-binding domain"/>
    <property type="match status" value="1"/>
</dbReference>
<dbReference type="InterPro" id="IPR004977">
    <property type="entry name" value="Ribosomal_eS25"/>
</dbReference>
<dbReference type="InterPro" id="IPR036388">
    <property type="entry name" value="WH-like_DNA-bd_sf"/>
</dbReference>
<dbReference type="Pfam" id="PF03297">
    <property type="entry name" value="Ribosomal_S25"/>
    <property type="match status" value="1"/>
</dbReference>
<reference key="1">
    <citation type="journal article" date="2002" name="Proc. Natl. Acad. Sci. U.S.A.">
        <title>Genome sequence of the hyperthermophilic crenarchaeon Pyrobaculum aerophilum.</title>
        <authorList>
            <person name="Fitz-Gibbon S.T."/>
            <person name="Ladner H."/>
            <person name="Kim U.-J."/>
            <person name="Stetter K.O."/>
            <person name="Simon M.I."/>
            <person name="Miller J.H."/>
        </authorList>
    </citation>
    <scope>NUCLEOTIDE SEQUENCE [LARGE SCALE GENOMIC DNA]</scope>
    <source>
        <strain>ATCC 51768 / DSM 7523 / JCM 9630 / CIP 104966 / NBRC 100827 / IM2</strain>
    </source>
</reference>
<comment type="similarity">
    <text evidence="2">Belongs to the eukaryotic ribosomal protein eS25 family.</text>
</comment>